<sequence length="848" mass="94002">MFERFTDRARRVVVLAQEEARMLNHNYIGTEHILLGLIHEGEGVAAKSLDSLGISLEAVRSQVEDIIGQGQQAPSGHIPFTPRAKKVLELSLREALQLGHNYIGTEHILLGLIREGEGVAAQVLVKLGAELTRVRQQVIQLLSGYQGKEAAEAGTGGRGGESGSPSTSLVLDQFGRNLTAAAMESKLDPVIGREKEIERVMQVLSRRTKNNPVLIGEPGVGKTAVVEGLAQAIVHGEVPETLKDKQLYTLDLGSLVAGSRYRGDFEERLKKVLKEINTRGDIILFIDELHTLVGAGAAEGAIDAASILKPKLARGELQTIGATTLDEYRKYIEKDAALERRFQPVQVGEPTVEHTIEILKGLRDRYEAHHRVSITDSAMVAAATLADRYINDRFLPDKAIDLIDEAGARMRIRRMTAPPDLREFDEKIAEARREKESAIDAQDFEKAASLRDREKQLVAQRAEREKQWRSGDLDVIAEVDDEQIAEVLGNWTGIPVFKLTEAETTRLLRMEEELHKRIIGQEDAVKAVSKAIRRTRAGLKDPKRPSGSFIFAGPSGVGKTELSKALANFLFGDDDALIQIDMGEFHDRFTASRLFGAPPGYVGYEEGGQLTEKVRRKPFSVVLFDEIEKAHQEIYNSLLQVLEDGRLTDGQGRTVDFKNTVLIFTSNLGTSDISKPVGLGFTQGSGENDYERMKQKVNDELKKHFRPEFLNRIDDIIVFHQLSRDEIIRMVDLMISRVANQLKVKDMTLELTNKAKALLAKRGFDPVLGARPLRRTIQREIEDQLSEKILFEEVGPGQVVTVDVDNWDGEGPGEDVKFTFTGIRKPSTEPDLAKAGVHSAGGPEPVEQ</sequence>
<feature type="chain" id="PRO_0000191235" description="Probable ATP-dependent Clp protease ATP-binding subunit">
    <location>
        <begin position="1"/>
        <end position="848"/>
    </location>
</feature>
<feature type="domain" description="Clp R" evidence="3">
    <location>
        <begin position="2"/>
        <end position="144"/>
    </location>
</feature>
<feature type="domain" description="UVR" evidence="2">
    <location>
        <begin position="425"/>
        <end position="460"/>
    </location>
</feature>
<feature type="region of interest" description="Repeat 1" evidence="3">
    <location>
        <begin position="5"/>
        <end position="70"/>
    </location>
</feature>
<feature type="region of interest" description="Repeat 2" evidence="3">
    <location>
        <begin position="80"/>
        <end position="144"/>
    </location>
</feature>
<feature type="region of interest" description="I">
    <location>
        <begin position="171"/>
        <end position="418"/>
    </location>
</feature>
<feature type="region of interest" description="II">
    <location>
        <begin position="479"/>
        <end position="670"/>
    </location>
</feature>
<feature type="region of interest" description="Disordered" evidence="4">
    <location>
        <begin position="823"/>
        <end position="848"/>
    </location>
</feature>
<feature type="binding site" evidence="1">
    <location>
        <begin position="216"/>
        <end position="223"/>
    </location>
    <ligand>
        <name>ATP</name>
        <dbReference type="ChEBI" id="CHEBI:30616"/>
    </ligand>
</feature>
<feature type="binding site" evidence="1">
    <location>
        <begin position="553"/>
        <end position="560"/>
    </location>
    <ligand>
        <name>ATP</name>
        <dbReference type="ChEBI" id="CHEBI:30616"/>
    </ligand>
</feature>
<feature type="sequence conflict" description="In Ref. 4; AAA25352." evidence="5" ref="4">
    <original>H</original>
    <variation>P</variation>
    <location>
        <position position="39"/>
    </location>
</feature>
<feature type="sequence conflict" description="In Ref. 2; CAA37573." evidence="5" ref="2">
    <original>TD</original>
    <variation>EF</variation>
    <location>
        <begin position="648"/>
        <end position="649"/>
    </location>
</feature>
<gene>
    <name type="primary">clpC</name>
    <name type="ordered locus">ML0235</name>
</gene>
<protein>
    <recommendedName>
        <fullName>Probable ATP-dependent Clp protease ATP-binding subunit</fullName>
    </recommendedName>
</protein>
<organism>
    <name type="scientific">Mycobacterium leprae (strain TN)</name>
    <dbReference type="NCBI Taxonomy" id="272631"/>
    <lineage>
        <taxon>Bacteria</taxon>
        <taxon>Bacillati</taxon>
        <taxon>Actinomycetota</taxon>
        <taxon>Actinomycetes</taxon>
        <taxon>Mycobacteriales</taxon>
        <taxon>Mycobacteriaceae</taxon>
        <taxon>Mycobacterium</taxon>
    </lineage>
</organism>
<evidence type="ECO:0000255" key="1"/>
<evidence type="ECO:0000255" key="2">
    <source>
        <dbReference type="PROSITE-ProRule" id="PRU00217"/>
    </source>
</evidence>
<evidence type="ECO:0000255" key="3">
    <source>
        <dbReference type="PROSITE-ProRule" id="PRU01251"/>
    </source>
</evidence>
<evidence type="ECO:0000256" key="4">
    <source>
        <dbReference type="SAM" id="MobiDB-lite"/>
    </source>
</evidence>
<evidence type="ECO:0000305" key="5"/>
<comment type="similarity">
    <text evidence="5">Belongs to the ClpA/ClpB family. ClpC subfamily.</text>
</comment>
<reference key="1">
    <citation type="journal article" date="2001" name="Nature">
        <title>Massive gene decay in the leprosy bacillus.</title>
        <authorList>
            <person name="Cole S.T."/>
            <person name="Eiglmeier K."/>
            <person name="Parkhill J."/>
            <person name="James K.D."/>
            <person name="Thomson N.R."/>
            <person name="Wheeler P.R."/>
            <person name="Honore N."/>
            <person name="Garnier T."/>
            <person name="Churcher C.M."/>
            <person name="Harris D.E."/>
            <person name="Mungall K.L."/>
            <person name="Basham D."/>
            <person name="Brown D."/>
            <person name="Chillingworth T."/>
            <person name="Connor R."/>
            <person name="Davies R.M."/>
            <person name="Devlin K."/>
            <person name="Duthoy S."/>
            <person name="Feltwell T."/>
            <person name="Fraser A."/>
            <person name="Hamlin N."/>
            <person name="Holroyd S."/>
            <person name="Hornsby T."/>
            <person name="Jagels K."/>
            <person name="Lacroix C."/>
            <person name="Maclean J."/>
            <person name="Moule S."/>
            <person name="Murphy L.D."/>
            <person name="Oliver K."/>
            <person name="Quail M.A."/>
            <person name="Rajandream M.A."/>
            <person name="Rutherford K.M."/>
            <person name="Rutter S."/>
            <person name="Seeger K."/>
            <person name="Simon S."/>
            <person name="Simmonds M."/>
            <person name="Skelton J."/>
            <person name="Squares R."/>
            <person name="Squares S."/>
            <person name="Stevens K."/>
            <person name="Taylor K."/>
            <person name="Whitehead S."/>
            <person name="Woodward J.R."/>
            <person name="Barrell B.G."/>
        </authorList>
    </citation>
    <scope>NUCLEOTIDE SEQUENCE [LARGE SCALE GENOMIC DNA]</scope>
    <source>
        <strain>TN</strain>
    </source>
</reference>
<reference key="2">
    <citation type="journal article" date="1990" name="Nucleic Acids Res.">
        <title>Nucleotide sequence and deduced amino acid sequence of Mycobacterium leprae gene showing homology to bacterial atp operon.</title>
        <authorList>
            <person name="Nath I."/>
            <person name="Laal S."/>
        </authorList>
    </citation>
    <scope>NUCLEOTIDE SEQUENCE [GENOMIC DNA] OF 1-649</scope>
</reference>
<reference key="3">
    <citation type="submission" date="1990-10" db="EMBL/GenBank/DDBJ databases">
        <authorList>
            <person name="Nath I."/>
        </authorList>
    </citation>
    <scope>SEQUENCE REVISION</scope>
</reference>
<reference key="4">
    <citation type="journal article" date="1991" name="Infect. Immun.">
        <title>Identification of Mycobacterium leprae antigens from a cosmid library: characterization of a 15-kilodalton antigen that is recognized by both the humoral and cellular immune systems in leprosy patients.</title>
        <authorList>
            <person name="Sela S."/>
            <person name="Thole J.E."/>
            <person name="Ottenhoff T.H."/>
            <person name="Clark-Curtiss J.E."/>
        </authorList>
    </citation>
    <scope>NUCLEOTIDE SEQUENCE [GENOMIC DNA] OF 1-97</scope>
</reference>
<accession>P24428</accession>
<name>CLPC_MYCLE</name>
<dbReference type="EMBL" id="AL583917">
    <property type="protein sequence ID" value="CAC29743.1"/>
    <property type="molecule type" value="Genomic_DNA"/>
</dbReference>
<dbReference type="EMBL" id="X53488">
    <property type="protein sequence ID" value="CAA37573.1"/>
    <property type="molecule type" value="Genomic_DNA"/>
</dbReference>
<dbReference type="EMBL" id="M67510">
    <property type="protein sequence ID" value="AAA25352.1"/>
    <property type="molecule type" value="Genomic_DNA"/>
</dbReference>
<dbReference type="PIR" id="C86938">
    <property type="entry name" value="C86938"/>
</dbReference>
<dbReference type="PIR" id="S11163">
    <property type="entry name" value="S11163"/>
</dbReference>
<dbReference type="RefSeq" id="NP_301295.1">
    <property type="nucleotide sequence ID" value="NC_002677.1"/>
</dbReference>
<dbReference type="SMR" id="P24428"/>
<dbReference type="STRING" id="272631.gene:17574052"/>
<dbReference type="KEGG" id="mle:ML0235"/>
<dbReference type="PATRIC" id="fig|272631.5.peg.368"/>
<dbReference type="Leproma" id="ML0235"/>
<dbReference type="eggNOG" id="COG0542">
    <property type="taxonomic scope" value="Bacteria"/>
</dbReference>
<dbReference type="HOGENOM" id="CLU_005070_4_1_11"/>
<dbReference type="OrthoDB" id="9803641at2"/>
<dbReference type="Proteomes" id="UP000000806">
    <property type="component" value="Chromosome"/>
</dbReference>
<dbReference type="GO" id="GO:0005737">
    <property type="term" value="C:cytoplasm"/>
    <property type="evidence" value="ECO:0007669"/>
    <property type="project" value="TreeGrafter"/>
</dbReference>
<dbReference type="GO" id="GO:0005524">
    <property type="term" value="F:ATP binding"/>
    <property type="evidence" value="ECO:0007669"/>
    <property type="project" value="UniProtKB-KW"/>
</dbReference>
<dbReference type="GO" id="GO:0016887">
    <property type="term" value="F:ATP hydrolysis activity"/>
    <property type="evidence" value="ECO:0007669"/>
    <property type="project" value="InterPro"/>
</dbReference>
<dbReference type="GO" id="GO:0034605">
    <property type="term" value="P:cellular response to heat"/>
    <property type="evidence" value="ECO:0007669"/>
    <property type="project" value="TreeGrafter"/>
</dbReference>
<dbReference type="CDD" id="cd00009">
    <property type="entry name" value="AAA"/>
    <property type="match status" value="1"/>
</dbReference>
<dbReference type="CDD" id="cd19499">
    <property type="entry name" value="RecA-like_ClpB_Hsp104-like"/>
    <property type="match status" value="1"/>
</dbReference>
<dbReference type="FunFam" id="1.10.8.60:FF:000017">
    <property type="entry name" value="ATP-dependent chaperone ClpB"/>
    <property type="match status" value="1"/>
</dbReference>
<dbReference type="FunFam" id="1.10.1780.10:FF:000001">
    <property type="entry name" value="ATP-dependent Clp protease ATP-binding subunit"/>
    <property type="match status" value="1"/>
</dbReference>
<dbReference type="FunFam" id="1.10.8.60:FF:000011">
    <property type="entry name" value="ATP-dependent Clp protease ATP-binding subunit"/>
    <property type="match status" value="1"/>
</dbReference>
<dbReference type="FunFam" id="4.10.860.10:FF:000004">
    <property type="entry name" value="ATP-dependent Clp protease ATP-binding subunit"/>
    <property type="match status" value="1"/>
</dbReference>
<dbReference type="FunFam" id="3.40.50.300:FF:000025">
    <property type="entry name" value="ATP-dependent Clp protease subunit"/>
    <property type="match status" value="1"/>
</dbReference>
<dbReference type="FunFam" id="3.40.50.300:FF:000010">
    <property type="entry name" value="Chaperone clpB 1, putative"/>
    <property type="match status" value="1"/>
</dbReference>
<dbReference type="Gene3D" id="1.10.8.60">
    <property type="match status" value="2"/>
</dbReference>
<dbReference type="Gene3D" id="1.10.1780.10">
    <property type="entry name" value="Clp, N-terminal domain"/>
    <property type="match status" value="1"/>
</dbReference>
<dbReference type="Gene3D" id="3.40.50.300">
    <property type="entry name" value="P-loop containing nucleotide triphosphate hydrolases"/>
    <property type="match status" value="2"/>
</dbReference>
<dbReference type="Gene3D" id="4.10.860.10">
    <property type="entry name" value="UVR domain"/>
    <property type="match status" value="1"/>
</dbReference>
<dbReference type="InterPro" id="IPR003593">
    <property type="entry name" value="AAA+_ATPase"/>
</dbReference>
<dbReference type="InterPro" id="IPR003959">
    <property type="entry name" value="ATPase_AAA_core"/>
</dbReference>
<dbReference type="InterPro" id="IPR019489">
    <property type="entry name" value="Clp_ATPase_C"/>
</dbReference>
<dbReference type="InterPro" id="IPR036628">
    <property type="entry name" value="Clp_N_dom_sf"/>
</dbReference>
<dbReference type="InterPro" id="IPR004176">
    <property type="entry name" value="Clp_R_dom"/>
</dbReference>
<dbReference type="InterPro" id="IPR001270">
    <property type="entry name" value="ClpA/B"/>
</dbReference>
<dbReference type="InterPro" id="IPR018368">
    <property type="entry name" value="ClpA/B_CS1"/>
</dbReference>
<dbReference type="InterPro" id="IPR041546">
    <property type="entry name" value="ClpA/ClpB_AAA_lid"/>
</dbReference>
<dbReference type="InterPro" id="IPR050130">
    <property type="entry name" value="ClpA_ClpB"/>
</dbReference>
<dbReference type="InterPro" id="IPR027417">
    <property type="entry name" value="P-loop_NTPase"/>
</dbReference>
<dbReference type="InterPro" id="IPR001943">
    <property type="entry name" value="UVR_dom"/>
</dbReference>
<dbReference type="PANTHER" id="PTHR11638">
    <property type="entry name" value="ATP-DEPENDENT CLP PROTEASE"/>
    <property type="match status" value="1"/>
</dbReference>
<dbReference type="PANTHER" id="PTHR11638:SF18">
    <property type="entry name" value="HEAT SHOCK PROTEIN 104"/>
    <property type="match status" value="1"/>
</dbReference>
<dbReference type="Pfam" id="PF00004">
    <property type="entry name" value="AAA"/>
    <property type="match status" value="1"/>
</dbReference>
<dbReference type="Pfam" id="PF07724">
    <property type="entry name" value="AAA_2"/>
    <property type="match status" value="1"/>
</dbReference>
<dbReference type="Pfam" id="PF17871">
    <property type="entry name" value="AAA_lid_9"/>
    <property type="match status" value="1"/>
</dbReference>
<dbReference type="Pfam" id="PF02861">
    <property type="entry name" value="Clp_N"/>
    <property type="match status" value="2"/>
</dbReference>
<dbReference type="Pfam" id="PF10431">
    <property type="entry name" value="ClpB_D2-small"/>
    <property type="match status" value="1"/>
</dbReference>
<dbReference type="PRINTS" id="PR00300">
    <property type="entry name" value="CLPPROTEASEA"/>
</dbReference>
<dbReference type="SMART" id="SM00382">
    <property type="entry name" value="AAA"/>
    <property type="match status" value="2"/>
</dbReference>
<dbReference type="SMART" id="SM01086">
    <property type="entry name" value="ClpB_D2-small"/>
    <property type="match status" value="1"/>
</dbReference>
<dbReference type="SUPFAM" id="SSF81923">
    <property type="entry name" value="Double Clp-N motif"/>
    <property type="match status" value="1"/>
</dbReference>
<dbReference type="SUPFAM" id="SSF52540">
    <property type="entry name" value="P-loop containing nucleoside triphosphate hydrolases"/>
    <property type="match status" value="2"/>
</dbReference>
<dbReference type="PROSITE" id="PS51903">
    <property type="entry name" value="CLP_R"/>
    <property type="match status" value="1"/>
</dbReference>
<dbReference type="PROSITE" id="PS00870">
    <property type="entry name" value="CLPAB_1"/>
    <property type="match status" value="1"/>
</dbReference>
<dbReference type="PROSITE" id="PS50151">
    <property type="entry name" value="UVR"/>
    <property type="match status" value="1"/>
</dbReference>
<keyword id="KW-0067">ATP-binding</keyword>
<keyword id="KW-0143">Chaperone</keyword>
<keyword id="KW-0547">Nucleotide-binding</keyword>
<keyword id="KW-1185">Reference proteome</keyword>
<keyword id="KW-0677">Repeat</keyword>
<proteinExistence type="inferred from homology"/>